<proteinExistence type="inferred from homology"/>
<comment type="function">
    <text evidence="1">DNA repair enzyme that is part of the base excision repair (BER) pathway; protects from oxidative damage by removing the major product of DNA oxidation, 8-oxoguanine (GO), from single- and double-stranded DNA substrates.</text>
</comment>
<comment type="catalytic activity">
    <reaction evidence="1">
        <text>2'-deoxyribonucleotide-(2'-deoxyribose 5'-phosphate)-2'-deoxyribonucleotide-DNA = a 3'-end 2'-deoxyribonucleotide-(2,3-dehydro-2,3-deoxyribose 5'-phosphate)-DNA + a 5'-end 5'-phospho-2'-deoxyribonucleoside-DNA + H(+)</text>
        <dbReference type="Rhea" id="RHEA:66592"/>
        <dbReference type="Rhea" id="RHEA-COMP:13180"/>
        <dbReference type="Rhea" id="RHEA-COMP:16897"/>
        <dbReference type="Rhea" id="RHEA-COMP:17067"/>
        <dbReference type="ChEBI" id="CHEBI:15378"/>
        <dbReference type="ChEBI" id="CHEBI:136412"/>
        <dbReference type="ChEBI" id="CHEBI:157695"/>
        <dbReference type="ChEBI" id="CHEBI:167181"/>
        <dbReference type="EC" id="4.2.99.18"/>
    </reaction>
</comment>
<comment type="domain">
    <text>Contains two alpha-helical subdomains, with the 8-oxoguanine binding site located in a cleft at their interface. Contains a helix-hairpin-helix (HhH) structural motif and a Gly/Pro-rich sequence followed by a conserved Asp (HhH-GPD motif).</text>
</comment>
<comment type="similarity">
    <text evidence="1">Belongs to the archaeal N-glycosylase/DNA lyase (AGOG) family.</text>
</comment>
<evidence type="ECO:0000255" key="1">
    <source>
        <dbReference type="HAMAP-Rule" id="MF_01168"/>
    </source>
</evidence>
<organism>
    <name type="scientific">Thermococcus kodakarensis (strain ATCC BAA-918 / JCM 12380 / KOD1)</name>
    <name type="common">Pyrococcus kodakaraensis (strain KOD1)</name>
    <dbReference type="NCBI Taxonomy" id="69014"/>
    <lineage>
        <taxon>Archaea</taxon>
        <taxon>Methanobacteriati</taxon>
        <taxon>Methanobacteriota</taxon>
        <taxon>Thermococci</taxon>
        <taxon>Thermococcales</taxon>
        <taxon>Thermococcaceae</taxon>
        <taxon>Thermococcus</taxon>
    </lineage>
</organism>
<dbReference type="EC" id="3.2.2.-" evidence="1"/>
<dbReference type="EC" id="4.2.99.18" evidence="1"/>
<dbReference type="EMBL" id="AP006878">
    <property type="protein sequence ID" value="BAD85129.1"/>
    <property type="molecule type" value="Genomic_DNA"/>
</dbReference>
<dbReference type="RefSeq" id="WP_011249891.1">
    <property type="nucleotide sequence ID" value="NC_006624.1"/>
</dbReference>
<dbReference type="SMR" id="Q5JI79"/>
<dbReference type="STRING" id="69014.TK0940"/>
<dbReference type="EnsemblBacteria" id="BAD85129">
    <property type="protein sequence ID" value="BAD85129"/>
    <property type="gene ID" value="TK0940"/>
</dbReference>
<dbReference type="GeneID" id="78447453"/>
<dbReference type="KEGG" id="tko:TK0940"/>
<dbReference type="PATRIC" id="fig|69014.16.peg.918"/>
<dbReference type="eggNOG" id="arCOG04144">
    <property type="taxonomic scope" value="Archaea"/>
</dbReference>
<dbReference type="HOGENOM" id="CLU_085935_0_0_2"/>
<dbReference type="InParanoid" id="Q5JI79"/>
<dbReference type="OrthoDB" id="15106at2157"/>
<dbReference type="PhylomeDB" id="Q5JI79"/>
<dbReference type="Proteomes" id="UP000000536">
    <property type="component" value="Chromosome"/>
</dbReference>
<dbReference type="GO" id="GO:0140078">
    <property type="term" value="F:class I DNA-(apurinic or apyrimidinic site) endonuclease activity"/>
    <property type="evidence" value="ECO:0007669"/>
    <property type="project" value="UniProtKB-EC"/>
</dbReference>
<dbReference type="GO" id="GO:0000702">
    <property type="term" value="F:oxidized base lesion DNA N-glycosylase activity"/>
    <property type="evidence" value="ECO:0007669"/>
    <property type="project" value="UniProtKB-UniRule"/>
</dbReference>
<dbReference type="GO" id="GO:0006284">
    <property type="term" value="P:base-excision repair"/>
    <property type="evidence" value="ECO:0007669"/>
    <property type="project" value="UniProtKB-UniRule"/>
</dbReference>
<dbReference type="Gene3D" id="1.10.340.30">
    <property type="entry name" value="Hypothetical protein, domain 2"/>
    <property type="match status" value="1"/>
</dbReference>
<dbReference type="HAMAP" id="MF_01168">
    <property type="entry name" value="AGOG"/>
    <property type="match status" value="1"/>
</dbReference>
<dbReference type="InterPro" id="IPR016544">
    <property type="entry name" value="AGOG"/>
</dbReference>
<dbReference type="InterPro" id="IPR015254">
    <property type="entry name" value="AGOG-like"/>
</dbReference>
<dbReference type="InterPro" id="IPR011257">
    <property type="entry name" value="DNA_glycosylase"/>
</dbReference>
<dbReference type="NCBIfam" id="NF009785">
    <property type="entry name" value="PRK13280.1-2"/>
    <property type="match status" value="1"/>
</dbReference>
<dbReference type="Pfam" id="PF09171">
    <property type="entry name" value="AGOG"/>
    <property type="match status" value="1"/>
</dbReference>
<dbReference type="PIRSF" id="PIRSF008955">
    <property type="entry name" value="AGOG"/>
    <property type="match status" value="1"/>
</dbReference>
<dbReference type="SUPFAM" id="SSF48150">
    <property type="entry name" value="DNA-glycosylase"/>
    <property type="match status" value="1"/>
</dbReference>
<feature type="chain" id="PRO_0000185116" description="N-glycosylase/DNA lyase">
    <location>
        <begin position="1"/>
        <end position="263"/>
    </location>
</feature>
<feature type="region of interest" description="Helix-hairpin-helix">
    <location>
        <begin position="139"/>
        <end position="204"/>
    </location>
</feature>
<feature type="active site" description="Schiff-base intermediate with DNA" evidence="1">
    <location>
        <position position="164"/>
    </location>
</feature>
<feature type="active site" evidence="1">
    <location>
        <position position="196"/>
    </location>
</feature>
<feature type="binding site" evidence="1">
    <location>
        <position position="43"/>
    </location>
    <ligand>
        <name>8-oxoguanine</name>
        <dbReference type="ChEBI" id="CHEBI:52617"/>
    </ligand>
</feature>
<feature type="binding site" evidence="1">
    <location>
        <position position="71"/>
    </location>
    <ligand>
        <name>8-oxoguanine</name>
        <dbReference type="ChEBI" id="CHEBI:52617"/>
    </ligand>
</feature>
<feature type="binding site" evidence="1">
    <location>
        <position position="82"/>
    </location>
    <ligand>
        <name>8-oxoguanine</name>
        <dbReference type="ChEBI" id="CHEBI:52617"/>
    </ligand>
</feature>
<feature type="binding site" evidence="1">
    <location>
        <position position="168"/>
    </location>
    <ligand>
        <name>8-oxoguanine</name>
        <dbReference type="ChEBI" id="CHEBI:52617"/>
    </ligand>
</feature>
<feature type="binding site" evidence="1">
    <location>
        <position position="194"/>
    </location>
    <ligand>
        <name>8-oxoguanine</name>
        <dbReference type="ChEBI" id="CHEBI:52617"/>
    </ligand>
</feature>
<feature type="binding site" evidence="1">
    <location>
        <position position="230"/>
    </location>
    <ligand>
        <name>8-oxoguanine</name>
        <dbReference type="ChEBI" id="CHEBI:52617"/>
    </ligand>
</feature>
<feature type="binding site" evidence="1">
    <location>
        <position position="234"/>
    </location>
    <ligand>
        <name>8-oxoguanine</name>
        <dbReference type="ChEBI" id="CHEBI:52617"/>
    </ligand>
</feature>
<keyword id="KW-0227">DNA damage</keyword>
<keyword id="KW-0228">DNA excision</keyword>
<keyword id="KW-0234">DNA repair</keyword>
<keyword id="KW-0378">Hydrolase</keyword>
<keyword id="KW-0456">Lyase</keyword>
<keyword id="KW-1185">Reference proteome</keyword>
<gene>
    <name type="ordered locus">TK0940</name>
</gene>
<name>AGOG_THEKO</name>
<reference key="1">
    <citation type="journal article" date="2005" name="Genome Res.">
        <title>Complete genome sequence of the hyperthermophilic archaeon Thermococcus kodakaraensis KOD1 and comparison with Pyrococcus genomes.</title>
        <authorList>
            <person name="Fukui T."/>
            <person name="Atomi H."/>
            <person name="Kanai T."/>
            <person name="Matsumi R."/>
            <person name="Fujiwara S."/>
            <person name="Imanaka T."/>
        </authorList>
    </citation>
    <scope>NUCLEOTIDE SEQUENCE [LARGE SCALE GENOMIC DNA]</scope>
    <source>
        <strain>ATCC BAA-918 / JCM 12380 / KOD1</strain>
    </source>
</reference>
<accession>Q5JI79</accession>
<protein>
    <recommendedName>
        <fullName evidence="1">N-glycosylase/DNA lyase</fullName>
    </recommendedName>
    <alternativeName>
        <fullName evidence="1">8-oxoguanine DNA glycosylase</fullName>
        <ecNumber evidence="1">3.2.2.-</ecNumber>
    </alternativeName>
    <alternativeName>
        <fullName evidence="1">AGOG</fullName>
    </alternativeName>
    <alternativeName>
        <fullName evidence="1">DNA-(apurinic or apyrimidinic site) lyase</fullName>
        <shortName evidence="1">AP lyase</shortName>
        <ecNumber evidence="1">4.2.99.18</ecNumber>
    </alternativeName>
</protein>
<sequence>MSLERFVKIKYQTNEEKADKLVEGLKELGIECARIIEEKVDLQFDALRHLRENLNDDETFIKLVIANSIVSYQLSGKGEDWWWEFSKYFSQNPPEKSIVEACSKFLPSSRTNRRLVAGKIKRLEKLEPFLNSLTLQELRRYYFENMMGLRNDIAEALGSPKTAKTVVFAVKMFGYAGRIAFGEFVPYPMEIDIPEDVRIKAYTERITNEPPVSFWRRVAEETGIPPLHIDSILWPVLGGKREVMERLKKVCEKWELVLELGSL</sequence>